<proteinExistence type="evidence at protein level"/>
<feature type="chain" id="PRO_0000055963" description="E3 ubiquitin-protein ligase MYCBP2">
    <location>
        <begin position="1"/>
        <end position="4678"/>
    </location>
</feature>
<feature type="repeat" description="RCC1 1" evidence="3">
    <location>
        <begin position="600"/>
        <end position="655"/>
    </location>
</feature>
<feature type="repeat" description="RCC1 2" evidence="3">
    <location>
        <begin position="699"/>
        <end position="755"/>
    </location>
</feature>
<feature type="repeat" description="RCC1 3" evidence="3">
    <location>
        <begin position="907"/>
        <end position="957"/>
    </location>
</feature>
<feature type="repeat" description="RCC1 4" evidence="3">
    <location>
        <begin position="958"/>
        <end position="1008"/>
    </location>
</feature>
<feature type="repeat" description="RCC1 5" evidence="3">
    <location>
        <begin position="1010"/>
        <end position="1066"/>
    </location>
</feature>
<feature type="repeat" description="Filamin" evidence="3">
    <location>
        <begin position="2341"/>
        <end position="2443"/>
    </location>
</feature>
<feature type="domain" description="DOC" evidence="5">
    <location>
        <begin position="3719"/>
        <end position="3897"/>
    </location>
</feature>
<feature type="zinc finger region" description="RING-type; atypical" evidence="4">
    <location>
        <begin position="4428"/>
        <end position="4479"/>
    </location>
</feature>
<feature type="region of interest" description="Disordered" evidence="6">
    <location>
        <begin position="87"/>
        <end position="127"/>
    </location>
</feature>
<feature type="region of interest" description="Disordered" evidence="6">
    <location>
        <begin position="172"/>
        <end position="192"/>
    </location>
</feature>
<feature type="region of interest" description="Disordered" evidence="6">
    <location>
        <begin position="609"/>
        <end position="628"/>
    </location>
</feature>
<feature type="region of interest" description="Disordered" evidence="6">
    <location>
        <begin position="898"/>
        <end position="928"/>
    </location>
</feature>
<feature type="region of interest" description="PHR domain 1" evidence="1">
    <location>
        <begin position="1235"/>
        <end position="1386"/>
    </location>
</feature>
<feature type="region of interest" description="PHR domain 2" evidence="1">
    <location>
        <begin position="1726"/>
        <end position="1884"/>
    </location>
</feature>
<feature type="region of interest" description="Disordered" evidence="6">
    <location>
        <begin position="1993"/>
        <end position="2012"/>
    </location>
</feature>
<feature type="region of interest" description="RAE1 binding" evidence="13">
    <location>
        <begin position="2022"/>
        <end position="2550"/>
    </location>
</feature>
<feature type="region of interest" description="Disordered" evidence="6">
    <location>
        <begin position="2321"/>
        <end position="2340"/>
    </location>
</feature>
<feature type="region of interest" description="Disordered" evidence="6">
    <location>
        <begin position="2709"/>
        <end position="2931"/>
    </location>
</feature>
<feature type="region of interest" description="Disordered" evidence="6">
    <location>
        <begin position="2943"/>
        <end position="2963"/>
    </location>
</feature>
<feature type="region of interest" description="Disordered" evidence="6">
    <location>
        <begin position="2979"/>
        <end position="3020"/>
    </location>
</feature>
<feature type="region of interest" description="Disordered" evidence="6">
    <location>
        <begin position="3066"/>
        <end position="3085"/>
    </location>
</feature>
<feature type="region of interest" description="Disordered" evidence="6">
    <location>
        <begin position="3605"/>
        <end position="3631"/>
    </location>
</feature>
<feature type="region of interest" description="Disordered" evidence="6">
    <location>
        <begin position="3915"/>
        <end position="3934"/>
    </location>
</feature>
<feature type="region of interest" description="Tandem cysteine domain" evidence="22">
    <location>
        <begin position="4539"/>
        <end position="4676"/>
    </location>
</feature>
<feature type="compositionally biased region" description="Basic residues" evidence="6">
    <location>
        <begin position="100"/>
        <end position="124"/>
    </location>
</feature>
<feature type="compositionally biased region" description="Basic residues" evidence="6">
    <location>
        <begin position="898"/>
        <end position="910"/>
    </location>
</feature>
<feature type="compositionally biased region" description="Basic and acidic residues" evidence="6">
    <location>
        <begin position="911"/>
        <end position="924"/>
    </location>
</feature>
<feature type="compositionally biased region" description="Polar residues" evidence="6">
    <location>
        <begin position="1994"/>
        <end position="2012"/>
    </location>
</feature>
<feature type="compositionally biased region" description="Polar residues" evidence="6">
    <location>
        <begin position="2718"/>
        <end position="2733"/>
    </location>
</feature>
<feature type="compositionally biased region" description="Basic and acidic residues" evidence="6">
    <location>
        <begin position="2742"/>
        <end position="2760"/>
    </location>
</feature>
<feature type="compositionally biased region" description="Basic and acidic residues" evidence="6">
    <location>
        <begin position="2775"/>
        <end position="2785"/>
    </location>
</feature>
<feature type="compositionally biased region" description="Polar residues" evidence="6">
    <location>
        <begin position="2786"/>
        <end position="2810"/>
    </location>
</feature>
<feature type="compositionally biased region" description="Low complexity" evidence="6">
    <location>
        <begin position="2828"/>
        <end position="2843"/>
    </location>
</feature>
<feature type="compositionally biased region" description="Basic and acidic residues" evidence="6">
    <location>
        <begin position="2860"/>
        <end position="2871"/>
    </location>
</feature>
<feature type="compositionally biased region" description="Basic residues" evidence="6">
    <location>
        <begin position="2988"/>
        <end position="3001"/>
    </location>
</feature>
<feature type="compositionally biased region" description="Basic and acidic residues" evidence="6">
    <location>
        <begin position="3616"/>
        <end position="3631"/>
    </location>
</feature>
<feature type="active site" evidence="17">
    <location>
        <position position="4558"/>
    </location>
</feature>
<feature type="active site" evidence="17">
    <location>
        <position position="4610"/>
    </location>
</feature>
<feature type="binding site" evidence="17 25">
    <location>
        <position position="4428"/>
    </location>
    <ligand>
        <name>Zn(2+)</name>
        <dbReference type="ChEBI" id="CHEBI:29105"/>
        <label>1</label>
    </ligand>
</feature>
<feature type="binding site" evidence="17 25">
    <location>
        <position position="4431"/>
    </location>
    <ligand>
        <name>Zn(2+)</name>
        <dbReference type="ChEBI" id="CHEBI:29105"/>
        <label>1</label>
    </ligand>
</feature>
<feature type="binding site" evidence="17 25">
    <location>
        <position position="4446"/>
    </location>
    <ligand>
        <name>Zn(2+)</name>
        <dbReference type="ChEBI" id="CHEBI:29105"/>
        <label>2</label>
    </ligand>
</feature>
<feature type="binding site" evidence="17 25">
    <location>
        <position position="4448"/>
    </location>
    <ligand>
        <name>Zn(2+)</name>
        <dbReference type="ChEBI" id="CHEBI:29105"/>
        <label>2</label>
    </ligand>
</feature>
<feature type="binding site" evidence="17 25">
    <location>
        <position position="4451"/>
    </location>
    <ligand>
        <name>Zn(2+)</name>
        <dbReference type="ChEBI" id="CHEBI:29105"/>
        <label>1</label>
    </ligand>
</feature>
<feature type="binding site" evidence="17 25">
    <location>
        <position position="4454"/>
    </location>
    <ligand>
        <name>Zn(2+)</name>
        <dbReference type="ChEBI" id="CHEBI:29105"/>
        <label>1</label>
    </ligand>
</feature>
<feature type="binding site" evidence="17 25">
    <location>
        <position position="4475"/>
    </location>
    <ligand>
        <name>Zn(2+)</name>
        <dbReference type="ChEBI" id="CHEBI:29105"/>
        <label>2</label>
    </ligand>
</feature>
<feature type="binding site" evidence="17 25">
    <location>
        <position position="4478"/>
    </location>
    <ligand>
        <name>Zn(2+)</name>
        <dbReference type="ChEBI" id="CHEBI:29105"/>
        <label>2</label>
    </ligand>
</feature>
<feature type="binding site" evidence="17 25">
    <location>
        <position position="4544"/>
    </location>
    <ligand>
        <name>Zn(2+)</name>
        <dbReference type="ChEBI" id="CHEBI:29105"/>
        <label>3</label>
    </ligand>
</feature>
<feature type="binding site" evidence="17 25">
    <location>
        <position position="4547"/>
    </location>
    <ligand>
        <name>Zn(2+)</name>
        <dbReference type="ChEBI" id="CHEBI:29105"/>
        <label>3</label>
    </ligand>
</feature>
<feature type="binding site" evidence="17 25">
    <location>
        <position position="4575"/>
    </location>
    <ligand>
        <name>Zn(2+)</name>
        <dbReference type="ChEBI" id="CHEBI:29105"/>
        <label>3</label>
    </ligand>
</feature>
<feature type="binding site" evidence="17 25">
    <location>
        <position position="4578"/>
    </location>
    <ligand>
        <name>Zn(2+)</name>
        <dbReference type="ChEBI" id="CHEBI:29105"/>
        <label>3</label>
    </ligand>
</feature>
<feature type="binding site" evidence="17 25">
    <location>
        <position position="4587"/>
    </location>
    <ligand>
        <name>Zn(2+)</name>
        <dbReference type="ChEBI" id="CHEBI:29105"/>
        <label>4</label>
    </ligand>
</feature>
<feature type="binding site" evidence="17 25">
    <location>
        <position position="4590"/>
    </location>
    <ligand>
        <name>Zn(2+)</name>
        <dbReference type="ChEBI" id="CHEBI:29105"/>
        <label>4</label>
    </ligand>
</feature>
<feature type="binding site" evidence="17 25">
    <location>
        <position position="4599"/>
    </location>
    <ligand>
        <name>Zn(2+)</name>
        <dbReference type="ChEBI" id="CHEBI:29105"/>
        <label>5</label>
    </ligand>
</feature>
<feature type="binding site" evidence="17 25">
    <location>
        <position position="4602"/>
    </location>
    <ligand>
        <name>Zn(2+)</name>
        <dbReference type="ChEBI" id="CHEBI:29105"/>
        <label>5</label>
    </ligand>
</feature>
<feature type="binding site" evidence="17 25">
    <location>
        <position position="4603"/>
    </location>
    <ligand>
        <name>Zn(2+)</name>
        <dbReference type="ChEBI" id="CHEBI:29105"/>
        <label>6</label>
    </ligand>
</feature>
<feature type="binding site" evidence="17 25">
    <location>
        <position position="4617"/>
    </location>
    <ligand>
        <name>Zn(2+)</name>
        <dbReference type="ChEBI" id="CHEBI:29105"/>
        <label>5</label>
    </ligand>
</feature>
<feature type="binding site" evidence="17 25">
    <location>
        <position position="4620"/>
    </location>
    <ligand>
        <name>Zn(2+)</name>
        <dbReference type="ChEBI" id="CHEBI:29105"/>
        <label>5</label>
    </ligand>
</feature>
<feature type="binding site" evidence="17 25">
    <location>
        <position position="4638"/>
    </location>
    <ligand>
        <name>Zn(2+)</name>
        <dbReference type="ChEBI" id="CHEBI:29105"/>
        <label>6</label>
    </ligand>
</feature>
<feature type="binding site" evidence="17 25">
    <location>
        <position position="4652"/>
    </location>
    <ligand>
        <name>Zn(2+)</name>
        <dbReference type="ChEBI" id="CHEBI:29105"/>
        <label>6</label>
    </ligand>
</feature>
<feature type="binding site" evidence="17 25">
    <location>
        <position position="4658"/>
    </location>
    <ligand>
        <name>Zn(2+)</name>
        <dbReference type="ChEBI" id="CHEBI:29105"/>
        <label>6</label>
    </ligand>
</feature>
<feature type="binding site" evidence="17 25">
    <location>
        <position position="4669"/>
    </location>
    <ligand>
        <name>Zn(2+)</name>
        <dbReference type="ChEBI" id="CHEBI:29105"/>
        <label>4</label>
    </ligand>
</feature>
<feature type="binding site" evidence="17 25">
    <location>
        <position position="4672"/>
    </location>
    <ligand>
        <name>Zn(2+)</name>
        <dbReference type="ChEBI" id="CHEBI:29105"/>
        <label>4</label>
    </ligand>
</feature>
<feature type="site" description="Important for catalysis" evidence="17">
    <location>
        <position position="4611"/>
    </location>
</feature>
<feature type="site" description="Important for catalysis" evidence="17">
    <location>
        <position position="4616"/>
    </location>
</feature>
<feature type="site" description="Important for catalysis" evidence="17">
    <location>
        <position position="4624"/>
    </location>
</feature>
<feature type="modified residue" description="Phosphoserine" evidence="32">
    <location>
        <position position="127"/>
    </location>
</feature>
<feature type="modified residue" description="Phosphoserine" evidence="27">
    <location>
        <position position="178"/>
    </location>
</feature>
<feature type="modified residue" description="Phosphoserine" evidence="27">
    <location>
        <position position="181"/>
    </location>
</feature>
<feature type="modified residue" description="Phosphoserine" evidence="27">
    <location>
        <position position="183"/>
    </location>
</feature>
<feature type="modified residue" description="Phosphoserine" evidence="32">
    <location>
        <position position="1624"/>
    </location>
</feature>
<feature type="modified residue" description="Phosphothreonine" evidence="27 30 31 32">
    <location>
        <position position="2683"/>
    </location>
</feature>
<feature type="modified residue" description="Phosphoserine" evidence="32">
    <location>
        <position position="2769"/>
    </location>
</feature>
<feature type="modified residue" description="Phosphoserine" evidence="32">
    <location>
        <position position="2787"/>
    </location>
</feature>
<feature type="modified residue" description="Phosphoserine" evidence="27 32">
    <location>
        <position position="2789"/>
    </location>
</feature>
<feature type="modified residue" description="Phosphoserine" evidence="32">
    <location>
        <position position="2833"/>
    </location>
</feature>
<feature type="modified residue" description="Phosphoserine" evidence="32">
    <location>
        <position position="2839"/>
    </location>
</feature>
<feature type="modified residue" description="Phosphoserine" evidence="2">
    <location>
        <position position="2869"/>
    </location>
</feature>
<feature type="modified residue" description="Phosphoserine" evidence="32">
    <location>
        <position position="2871"/>
    </location>
</feature>
<feature type="modified residue" description="Phosphoserine" evidence="30">
    <location>
        <position position="2920"/>
    </location>
</feature>
<feature type="modified residue" description="Phosphoserine" evidence="32">
    <location>
        <position position="2985"/>
    </location>
</feature>
<feature type="modified residue" description="Phosphoserine" evidence="26">
    <location>
        <position position="3090"/>
    </location>
</feature>
<feature type="modified residue" description="Phosphoserine" evidence="27 33">
    <location>
        <position position="3478"/>
    </location>
</feature>
<feature type="modified residue" description="Phosphoserine" evidence="27 28 29 30 31 32">
    <location>
        <position position="3505"/>
    </location>
</feature>
<feature type="modified residue" description="Phosphothreonine" evidence="2">
    <location>
        <position position="3921"/>
    </location>
</feature>
<feature type="modified residue" description="Phosphoserine" evidence="32">
    <location>
        <position position="3931"/>
    </location>
</feature>
<feature type="modified residue" description="Phosphoserine" evidence="32">
    <location>
        <position position="3932"/>
    </location>
</feature>
<feature type="disulfide bond" evidence="2">
    <location>
        <begin position="1748"/>
        <end position="1863"/>
    </location>
</feature>
<feature type="splice variant" id="VSP_014183" description="In isoform 2." evidence="21">
    <location>
        <begin position="3939"/>
        <end position="3941"/>
    </location>
</feature>
<feature type="sequence variant" id="VAR_052086" description="In dbSNP:rs35887505.">
    <original>A</original>
    <variation>S</variation>
    <location>
        <position position="1919"/>
    </location>
</feature>
<feature type="sequence variant" id="VAR_030070" description="In dbSNP:rs9574002.">
    <original>V</original>
    <variation>M</variation>
    <location>
        <position position="2626"/>
    </location>
</feature>
<feature type="mutagenesis site" description="Abolished E3 ubiquitin-protein ligase activity." evidence="17">
    <original>C</original>
    <variation>S</variation>
    <location>
        <position position="4558"/>
    </location>
</feature>
<feature type="mutagenesis site" description="Does not affect E3 ubiquitin-protein ligase activity." evidence="17">
    <original>E</original>
    <variation>A</variation>
    <variation>Q</variation>
    <location>
        <position position="4572"/>
    </location>
</feature>
<feature type="mutagenesis site" description="Increased thiol-sensitive adduct formation." evidence="17">
    <original>C</original>
    <variation>A</variation>
    <location>
        <position position="4610"/>
    </location>
</feature>
<feature type="mutagenesis site" description="Retains activity while also forming a discrete monoubiquitin adduct that is resistant to thiolysis but is reversible after base treatment." evidence="17">
    <original>C</original>
    <variation>S</variation>
    <location>
        <position position="4610"/>
    </location>
</feature>
<feature type="mutagenesis site" description="Reduced E3 ubiquitin-protein ligase activity in threonine discharge assay." evidence="17">
    <original>F</original>
    <variation>A</variation>
    <location>
        <position position="4611"/>
    </location>
</feature>
<feature type="mutagenesis site" description="Reduced E3 ubiquitin-protein ligase activity in threonine discharge assay." evidence="17">
    <original>F</original>
    <variation>A</variation>
    <location>
        <position position="4616"/>
    </location>
</feature>
<feature type="mutagenesis site" description="Abolished E3 ubiquitin-protein ligase activity in threonine discharge assay, associated with enhanced thiol-sensitive ubiquitin adduct formation." evidence="17">
    <original>H</original>
    <variation>N</variation>
    <location>
        <position position="4621"/>
    </location>
</feature>
<feature type="mutagenesis site" description="Reduced E3 ubiquitin-protein ligase activity in threonine discharge assay." evidence="17">
    <original>F</original>
    <variation>A</variation>
    <location>
        <position position="4624"/>
    </location>
</feature>
<feature type="sequence conflict" description="In Ref. 1; AAC39928." evidence="21" ref="1">
    <original>R</original>
    <variation>P</variation>
    <location>
        <position position="61"/>
    </location>
</feature>
<feature type="sequence conflict" description="In Ref. 1; AAC39928." evidence="21" ref="1">
    <original>G</original>
    <variation>V</variation>
    <location>
        <position position="240"/>
    </location>
</feature>
<feature type="sequence conflict" description="In Ref. 1; AAC39928." evidence="21" ref="1">
    <original>G</original>
    <variation>R</variation>
    <location>
        <position position="510"/>
    </location>
</feature>
<feature type="sequence conflict" description="In Ref. 1; AAC39928." evidence="21" ref="1">
    <original>T</original>
    <variation>I</variation>
    <location>
        <position position="618"/>
    </location>
</feature>
<feature type="sequence conflict" description="In Ref. 1; AAC39928." evidence="21" ref="1">
    <original>QL</original>
    <variation>HV</variation>
    <location>
        <begin position="903"/>
        <end position="904"/>
    </location>
</feature>
<feature type="sequence conflict" description="In Ref. 1; AAC39928." evidence="21" ref="1">
    <original>GV</original>
    <variation>PL</variation>
    <location>
        <begin position="1512"/>
        <end position="1513"/>
    </location>
</feature>
<feature type="sequence conflict" description="In Ref. 1; AAC39928." evidence="21" ref="1">
    <original>K</original>
    <variation>M</variation>
    <location>
        <position position="2139"/>
    </location>
</feature>
<feature type="sequence conflict" description="In Ref. 1; AAC39928." evidence="21" ref="1">
    <original>E</original>
    <variation>GR</variation>
    <location>
        <position position="3201"/>
    </location>
</feature>
<feature type="sequence conflict" description="In Ref. 1; AAC39928." evidence="21" ref="1">
    <original>A</original>
    <variation>R</variation>
    <location>
        <position position="3645"/>
    </location>
</feature>
<feature type="turn" evidence="34">
    <location>
        <begin position="4429"/>
        <end position="4431"/>
    </location>
</feature>
<feature type="strand" evidence="34">
    <location>
        <begin position="4432"/>
        <end position="4435"/>
    </location>
</feature>
<feature type="helix" evidence="34">
    <location>
        <begin position="4436"/>
        <end position="4438"/>
    </location>
</feature>
<feature type="strand" evidence="34">
    <location>
        <begin position="4441"/>
        <end position="4443"/>
    </location>
</feature>
<feature type="strand" evidence="34">
    <location>
        <begin position="4449"/>
        <end position="4451"/>
    </location>
</feature>
<feature type="helix" evidence="34">
    <location>
        <begin position="4452"/>
        <end position="4461"/>
    </location>
</feature>
<feature type="strand" evidence="34">
    <location>
        <begin position="4464"/>
        <end position="4467"/>
    </location>
</feature>
<feature type="helix" evidence="34">
    <location>
        <begin position="4471"/>
        <end position="4473"/>
    </location>
</feature>
<feature type="turn" evidence="34">
    <location>
        <begin position="4476"/>
        <end position="4478"/>
    </location>
</feature>
<feature type="helix" evidence="34">
    <location>
        <begin position="4485"/>
        <end position="4487"/>
    </location>
</feature>
<feature type="helix" evidence="34">
    <location>
        <begin position="4488"/>
        <end position="4511"/>
    </location>
</feature>
<feature type="helix" evidence="34">
    <location>
        <begin position="4518"/>
        <end position="4521"/>
    </location>
</feature>
<feature type="turn" evidence="34">
    <location>
        <begin position="4526"/>
        <end position="4529"/>
    </location>
</feature>
<feature type="helix" evidence="34">
    <location>
        <begin position="4531"/>
        <end position="4538"/>
    </location>
</feature>
<feature type="strand" evidence="34">
    <location>
        <begin position="4539"/>
        <end position="4543"/>
    </location>
</feature>
<feature type="turn" evidence="34">
    <location>
        <begin position="4545"/>
        <end position="4547"/>
    </location>
</feature>
<feature type="strand" evidence="34">
    <location>
        <begin position="4550"/>
        <end position="4555"/>
    </location>
</feature>
<feature type="turn" evidence="35">
    <location>
        <begin position="4559"/>
        <end position="4562"/>
    </location>
</feature>
<feature type="helix" evidence="34">
    <location>
        <begin position="4570"/>
        <end position="4572"/>
    </location>
</feature>
<feature type="helix" evidence="34">
    <location>
        <begin position="4577"/>
        <end position="4579"/>
    </location>
</feature>
<feature type="turn" evidence="34">
    <location>
        <begin position="4588"/>
        <end position="4590"/>
    </location>
</feature>
<feature type="turn" evidence="34">
    <location>
        <begin position="4592"/>
        <end position="4594"/>
    </location>
</feature>
<feature type="strand" evidence="34">
    <location>
        <begin position="4595"/>
        <end position="4598"/>
    </location>
</feature>
<feature type="strand" evidence="34">
    <location>
        <begin position="4602"/>
        <end position="4605"/>
    </location>
</feature>
<feature type="strand" evidence="34">
    <location>
        <begin position="4608"/>
        <end position="4610"/>
    </location>
</feature>
<feature type="turn" evidence="34">
    <location>
        <begin position="4611"/>
        <end position="4613"/>
    </location>
</feature>
<feature type="strand" evidence="34">
    <location>
        <begin position="4614"/>
        <end position="4616"/>
    </location>
</feature>
<feature type="helix" evidence="34">
    <location>
        <begin position="4618"/>
        <end position="4622"/>
    </location>
</feature>
<feature type="helix" evidence="34">
    <location>
        <begin position="4624"/>
        <end position="4629"/>
    </location>
</feature>
<feature type="helix" evidence="34">
    <location>
        <begin position="4632"/>
        <end position="4634"/>
    </location>
</feature>
<feature type="strand" evidence="34">
    <location>
        <begin position="4638"/>
        <end position="4641"/>
    </location>
</feature>
<feature type="helix" evidence="34">
    <location>
        <begin position="4642"/>
        <end position="4644"/>
    </location>
</feature>
<feature type="strand" evidence="34">
    <location>
        <begin position="4648"/>
        <end position="4650"/>
    </location>
</feature>
<feature type="strand" evidence="34">
    <location>
        <begin position="4666"/>
        <end position="4669"/>
    </location>
</feature>
<feature type="helix" evidence="34">
    <location>
        <begin position="4672"/>
        <end position="4674"/>
    </location>
</feature>
<accession>O75592</accession>
<accession>A6NJC6</accession>
<accession>Q5JSX8</accession>
<accession>Q5VZN6</accession>
<accession>Q6PIB6</accession>
<accession>Q9UQ11</accession>
<accession>Q9Y6E4</accession>
<protein>
    <recommendedName>
        <fullName evidence="21">E3 ubiquitin-protein ligase MYCBP2</fullName>
        <ecNumber evidence="17">2.3.2.33</ecNumber>
    </recommendedName>
    <alternativeName>
        <fullName evidence="21">Myc-binding protein 2</fullName>
    </alternativeName>
    <alternativeName>
        <fullName evidence="20">Protein associated with Myc</fullName>
    </alternativeName>
</protein>
<comment type="function">
    <text evidence="2 10 12 14 15 17 18">Atypical E3 ubiquitin-protein ligase which specifically mediates ubiquitination of threonine and serine residues on target proteins, instead of ubiquitinating lysine residues (PubMed:29643511). Shows esterification activity towards both threonine and serine, with a preference for threonine, and acts via two essential catalytic cysteine residues that relay ubiquitin to its substrate via thioester intermediates (PubMed:29643511). Interacts with the E2 enzymes UBE2D1, UBE2D3, UBE2E1 and UBE2L3 (PubMed:18308511, PubMed:29643511). Plays a key role in neural development, probably by mediating ubiquitination of threonine residues on target proteins (Probable). Involved in different processes such as regulation of neurite outgrowth, synaptic growth, synaptogenesis and axon degeneration (By similarity). Required for the formation of major central nervous system axon tracts (By similarity). Required for proper axon growth by regulating axon navigation and axon branching: acts by regulating the subcellular location and stability of MAP3K12/DLK (By similarity). Required for proper localization of retinogeniculate projections but not for eye-specific segregation (By similarity). Regulates axon guidance in the olfactory system (By similarity). Involved in Wallerian axon degeneration, an evolutionarily conserved process that drives the loss of damaged axons: acts by promoting destabilization of NMNAT2, probably via ubiquitination of NMNAT2 (By similarity). Catalyzes ubiquitination of threonine and/or serine residues on NMNAT2, consequences of threonine and/or serine ubiquitination are however unknown (PubMed:29643511). Regulates the internalization of TRPV1 in peripheral sensory neurons (By similarity). Mediates ubiquitination and subsequent proteasomal degradation of TSC2/tuberin (PubMed:18308511, PubMed:27278822). Independently of the E3 ubiquitin-protein ligase activity, also acts as a guanosine exchange factor (GEF) for RAN in neurons of dorsal root ganglia (PubMed:26304119). May function as a facilitator or regulator of transcriptional activation by MYC (PubMed:9689053). Acts in concert with HUWE1 to regulate the circadian clock gene expression by promoting the lithium-induced ubiquination and degradation of NR1D1 (PubMed:20534529).</text>
</comment>
<comment type="catalytic activity">
    <reaction evidence="17">
        <text>[E2 ubiquitin-conjugating enzyme]-S-ubiquitinyl-L-cysteine + [acceptor protein]-L-threonine = [E2 ubiquitin-conjugating enzyme]-L-cysteine + [acceptor protein]-3-O-ubiquitinyl-L-threonine.</text>
        <dbReference type="EC" id="2.3.2.33"/>
    </reaction>
</comment>
<comment type="pathway">
    <text evidence="10 17">Protein modification; protein ubiquitination.</text>
</comment>
<comment type="subunit">
    <text evidence="2 9 11 13 14 15 16 18">Interacts with MYC (PubMed:9689053). Interacts with TSC2 (tuberin) when TSC2 is in complex with TSC1 (hamartin) (PubMed:14559897). Interacts with FBXO45 (PubMed:19398581). Interacts with RAE1 (PubMed:22357847). Interacts with CPNE1 (via VWFA domain) and CPNE4 (via VWFA domain) (By similarity). Interacts with (sumoylated) RANGAP1; interaction with sumoylated RANGAP1 inhibits E3 ubiquitin-protein ligase activity and promotes MYCBP2 translocation to the nucleus (PubMed:26304119). Interacts with RAN (PubMed:26304119). Interacts with ATP13A2; the interaction inhibits the ubiquitination of TSC2 by MYCBP2 (PubMed:27278822). Interacts with USP11 (PubMed:29293652).</text>
</comment>
<comment type="interaction">
    <interactant intactId="EBI-1043774">
        <id>O75592</id>
    </interactant>
    <interactant intactId="EBI-476295">
        <id>P31947</id>
        <label>SFN</label>
    </interactant>
    <organismsDiffer>false</organismsDiffer>
    <experiments>4</experiments>
</comment>
<comment type="interaction">
    <interactant intactId="EBI-1043774">
        <id>O75592</id>
    </interactant>
    <interactant intactId="EBI-347088">
        <id>P63104</id>
        <label>YWHAZ</label>
    </interactant>
    <organismsDiffer>false</organismsDiffer>
    <experiments>4</experiments>
</comment>
<comment type="interaction">
    <interactant intactId="EBI-1043774">
        <id>O75592</id>
    </interactant>
    <interactant intactId="EBI-6920222">
        <id>Q3SWS8</id>
        <label>Rae1</label>
    </interactant>
    <organismsDiffer>true</organismsDiffer>
    <experiments>2</experiments>
</comment>
<comment type="interaction">
    <interactant intactId="EBI-1043774">
        <id>O75592</id>
    </interactant>
    <interactant intactId="EBI-6927928">
        <id>PRO_0000045603</id>
        <dbReference type="UniProtKB" id="Q99IB8"/>
    </interactant>
    <organismsDiffer>true</organismsDiffer>
    <experiments>3</experiments>
</comment>
<comment type="subcellular location">
    <subcellularLocation>
        <location evidence="14 18">Nucleus</location>
    </subcellularLocation>
    <subcellularLocation>
        <location evidence="2">Cell projection</location>
        <location evidence="2">Axon</location>
    </subcellularLocation>
    <subcellularLocation>
        <location evidence="2">Cytoplasm</location>
        <location evidence="2">Cytoskeleton</location>
    </subcellularLocation>
    <text evidence="2 14">Localizes to axon shafts and associates with microtubule cytoskeleton (By similarity). Translocates to the nucleus following interaction with sumoylated RANGAP1 (PubMed:26304119).</text>
</comment>
<comment type="alternative products">
    <event type="alternative splicing"/>
    <isoform>
        <id>O75592-1</id>
        <name evidence="18">1</name>
        <sequence type="displayed"/>
    </isoform>
    <isoform>
        <id>O75592-2</id>
        <name evidence="21">2</name>
        <sequence type="described" ref="VSP_014183"/>
    </isoform>
</comment>
<comment type="tissue specificity">
    <text evidence="18">Expressed in all tissues examined, expression is exceptionally abundant in brain and thymus. Colocalizes with TSC1 and TSC2 along the neurites and in the growth cones. Highly expressed in peripheral and central neurons. Colocalized with TSC1 in one of the filopodial extensions at the tip of a growth cone.</text>
</comment>
<comment type="domain">
    <text evidence="2">The PHR domains are compact beta-sandwich folds composed of 11 antiparallel strands and decorated with conserved apical loops. They are likely to play a structural role and mediate interactions with substrates or partners (By similarity).</text>
</comment>
<comment type="domain">
    <text evidence="17">The tandem cysteine domain region confers threonine specificity and contains the two essential catalytic cysteine residues that relay ubiquitin. It binds four zinc ions in a C5HC7HC2 configuration.</text>
</comment>
<comment type="PTM">
    <text evidence="10">Autoubiquitinated.</text>
</comment>
<comment type="similarity">
    <text evidence="21">Belongs to the RING-Cys relay (RCR) family.</text>
</comment>
<comment type="sequence caution" evidence="21">
    <conflict type="frameshift">
        <sequence resource="EMBL-CDS" id="AAD39842"/>
    </conflict>
</comment>
<comment type="sequence caution" evidence="21">
    <conflict type="erroneous initiation">
        <sequence resource="EMBL-CDS" id="AAH37971"/>
    </conflict>
    <text>Extended N-terminus.</text>
</comment>
<comment type="sequence caution" evidence="21">
    <conflict type="erroneous gene model prediction">
        <sequence resource="EMBL-CDS" id="CAI39758"/>
    </conflict>
</comment>
<gene>
    <name evidence="24" type="primary">MYCBP2</name>
    <name evidence="19" type="synonym">KIAA0916</name>
    <name evidence="20" type="synonym">PAM</name>
</gene>
<dbReference type="EC" id="2.3.2.33" evidence="17"/>
<dbReference type="EMBL" id="AF075587">
    <property type="protein sequence ID" value="AAC39928.1"/>
    <property type="molecule type" value="mRNA"/>
</dbReference>
<dbReference type="EMBL" id="AL159154">
    <property type="protein sequence ID" value="CAH73736.1"/>
    <property type="molecule type" value="Genomic_DNA"/>
</dbReference>
<dbReference type="EMBL" id="AL159158">
    <property type="protein sequence ID" value="CAH73736.1"/>
    <property type="status" value="JOINED"/>
    <property type="molecule type" value="Genomic_DNA"/>
</dbReference>
<dbReference type="EMBL" id="AL359257">
    <property type="protein sequence ID" value="CAH73736.1"/>
    <property type="status" value="JOINED"/>
    <property type="molecule type" value="Genomic_DNA"/>
</dbReference>
<dbReference type="EMBL" id="AC001226">
    <property type="protein sequence ID" value="CAH73736.1"/>
    <property type="status" value="JOINED"/>
    <property type="molecule type" value="Genomic_DNA"/>
</dbReference>
<dbReference type="EMBL" id="AL159158">
    <property type="protein sequence ID" value="CAI16842.1"/>
    <property type="molecule type" value="Genomic_DNA"/>
</dbReference>
<dbReference type="EMBL" id="AL159154">
    <property type="protein sequence ID" value="CAI16842.1"/>
    <property type="status" value="JOINED"/>
    <property type="molecule type" value="Genomic_DNA"/>
</dbReference>
<dbReference type="EMBL" id="AL359257">
    <property type="protein sequence ID" value="CAI16842.1"/>
    <property type="status" value="JOINED"/>
    <property type="molecule type" value="Genomic_DNA"/>
</dbReference>
<dbReference type="EMBL" id="AC001226">
    <property type="protein sequence ID" value="CAI16842.1"/>
    <property type="status" value="JOINED"/>
    <property type="molecule type" value="Genomic_DNA"/>
</dbReference>
<dbReference type="EMBL" id="AL359257">
    <property type="protein sequence ID" value="CAI39759.1"/>
    <property type="molecule type" value="Genomic_DNA"/>
</dbReference>
<dbReference type="EMBL" id="AL159158">
    <property type="protein sequence ID" value="CAI39759.1"/>
    <property type="status" value="JOINED"/>
    <property type="molecule type" value="Genomic_DNA"/>
</dbReference>
<dbReference type="EMBL" id="AL159154">
    <property type="protein sequence ID" value="CAI39759.1"/>
    <property type="status" value="JOINED"/>
    <property type="molecule type" value="Genomic_DNA"/>
</dbReference>
<dbReference type="EMBL" id="AC001226">
    <property type="protein sequence ID" value="CAI39759.1"/>
    <property type="status" value="JOINED"/>
    <property type="molecule type" value="Genomic_DNA"/>
</dbReference>
<dbReference type="EMBL" id="AL359257">
    <property type="protein sequence ID" value="CAI39758.1"/>
    <property type="status" value="ALT_SEQ"/>
    <property type="molecule type" value="Genomic_DNA"/>
</dbReference>
<dbReference type="EMBL" id="AC001226">
    <property type="protein sequence ID" value="CAI39758.1"/>
    <property type="status" value="JOINED"/>
    <property type="molecule type" value="Genomic_DNA"/>
</dbReference>
<dbReference type="EMBL" id="CH471093">
    <property type="protein sequence ID" value="EAW80565.1"/>
    <property type="molecule type" value="Genomic_DNA"/>
</dbReference>
<dbReference type="EMBL" id="AB020723">
    <property type="protein sequence ID" value="BAA74939.1"/>
    <property type="molecule type" value="mRNA"/>
</dbReference>
<dbReference type="EMBL" id="BC037971">
    <property type="protein sequence ID" value="AAH37971.1"/>
    <property type="status" value="ALT_INIT"/>
    <property type="molecule type" value="mRNA"/>
</dbReference>
<dbReference type="EMBL" id="AF083244">
    <property type="protein sequence ID" value="AAD39842.1"/>
    <property type="status" value="ALT_FRAME"/>
    <property type="molecule type" value="mRNA"/>
</dbReference>
<dbReference type="RefSeq" id="NP_055872.4">
    <molecule id="O75592-1"/>
    <property type="nucleotide sequence ID" value="NM_015057.5"/>
</dbReference>
<dbReference type="PDB" id="5O6C">
    <property type="method" value="X-ray"/>
    <property type="resolution" value="1.75 A"/>
    <property type="chains" value="A=4416-4678"/>
</dbReference>
<dbReference type="PDB" id="6T7F">
    <property type="method" value="X-ray"/>
    <property type="resolution" value="2.58 A"/>
    <property type="chains" value="A=4423-4678"/>
</dbReference>
<dbReference type="PDBsum" id="5O6C"/>
<dbReference type="PDBsum" id="6T7F"/>
<dbReference type="SMR" id="O75592"/>
<dbReference type="BioGRID" id="116709">
    <property type="interactions" value="258"/>
</dbReference>
<dbReference type="ComplexPortal" id="CPX-8004">
    <property type="entry name" value="Non-canonical FBXO45-MYCBP2-SKP1 E3 ubiquitin ligase complex"/>
</dbReference>
<dbReference type="CORUM" id="O75592"/>
<dbReference type="DIP" id="DIP-28142N"/>
<dbReference type="FunCoup" id="O75592">
    <property type="interactions" value="5162"/>
</dbReference>
<dbReference type="IntAct" id="O75592">
    <property type="interactions" value="193"/>
</dbReference>
<dbReference type="MINT" id="O75592"/>
<dbReference type="STRING" id="9606.ENSP00000444596"/>
<dbReference type="GlyCosmos" id="O75592">
    <property type="glycosylation" value="1 site, 1 glycan"/>
</dbReference>
<dbReference type="GlyGen" id="O75592">
    <property type="glycosylation" value="10 sites, 2 N-linked glycans (2 sites), 1 O-linked glycan (6 sites)"/>
</dbReference>
<dbReference type="iPTMnet" id="O75592"/>
<dbReference type="MetOSite" id="O75592"/>
<dbReference type="PhosphoSitePlus" id="O75592"/>
<dbReference type="SwissPalm" id="O75592"/>
<dbReference type="BioMuta" id="MYCBP2"/>
<dbReference type="jPOST" id="O75592"/>
<dbReference type="MassIVE" id="O75592"/>
<dbReference type="PaxDb" id="9606-ENSP00000444596"/>
<dbReference type="PeptideAtlas" id="O75592"/>
<dbReference type="ProteomicsDB" id="50101">
    <molecule id="O75592-1"/>
</dbReference>
<dbReference type="ProteomicsDB" id="50102">
    <molecule id="O75592-2"/>
</dbReference>
<dbReference type="Pumba" id="O75592"/>
<dbReference type="Antibodypedia" id="24520">
    <property type="antibodies" value="49 antibodies from 11 providers"/>
</dbReference>
<dbReference type="DNASU" id="23077"/>
<dbReference type="Ensembl" id="ENST00000544440.7">
    <molecule id="O75592-1"/>
    <property type="protein sequence ID" value="ENSP00000444596.2"/>
    <property type="gene ID" value="ENSG00000005810.20"/>
</dbReference>
<dbReference type="GeneID" id="23077"/>
<dbReference type="KEGG" id="hsa:23077"/>
<dbReference type="MANE-Select" id="ENST00000544440.7">
    <property type="protein sequence ID" value="ENSP00000444596.2"/>
    <property type="RefSeq nucleotide sequence ID" value="NM_015057.5"/>
    <property type="RefSeq protein sequence ID" value="NP_055872.4"/>
</dbReference>
<dbReference type="UCSC" id="uc058xok.1">
    <molecule id="O75592-1"/>
    <property type="organism name" value="human"/>
</dbReference>
<dbReference type="AGR" id="HGNC:23386"/>
<dbReference type="CTD" id="23077"/>
<dbReference type="DisGeNET" id="23077"/>
<dbReference type="GeneCards" id="MYCBP2"/>
<dbReference type="HGNC" id="HGNC:23386">
    <property type="gene designation" value="MYCBP2"/>
</dbReference>
<dbReference type="HPA" id="ENSG00000005810">
    <property type="expression patterns" value="Low tissue specificity"/>
</dbReference>
<dbReference type="MalaCards" id="MYCBP2"/>
<dbReference type="MIM" id="610392">
    <property type="type" value="gene"/>
</dbReference>
<dbReference type="neXtProt" id="NX_O75592"/>
<dbReference type="OpenTargets" id="ENSG00000005810"/>
<dbReference type="PharmGKB" id="PA134871126"/>
<dbReference type="VEuPathDB" id="HostDB:ENSG00000005810"/>
<dbReference type="eggNOG" id="KOG1428">
    <property type="taxonomic scope" value="Eukaryota"/>
</dbReference>
<dbReference type="GeneTree" id="ENSGT00940000155756"/>
<dbReference type="HOGENOM" id="CLU_000063_0_0_1"/>
<dbReference type="InParanoid" id="O75592"/>
<dbReference type="OMA" id="MAHPGCG"/>
<dbReference type="OrthoDB" id="6050183at2759"/>
<dbReference type="PAN-GO" id="O75592">
    <property type="GO annotations" value="5 GO annotations based on evolutionary models"/>
</dbReference>
<dbReference type="PhylomeDB" id="O75592"/>
<dbReference type="TreeFam" id="TF313151"/>
<dbReference type="BRENDA" id="2.3.2.33">
    <property type="organism ID" value="2681"/>
</dbReference>
<dbReference type="PathwayCommons" id="O75592"/>
<dbReference type="SignaLink" id="O75592"/>
<dbReference type="SIGNOR" id="O75592"/>
<dbReference type="UniPathway" id="UPA00143"/>
<dbReference type="BioGRID-ORCS" id="23077">
    <property type="hits" value="13 hits in 340 CRISPR screens"/>
</dbReference>
<dbReference type="CD-CODE" id="FB4E32DD">
    <property type="entry name" value="Presynaptic clusters and postsynaptic densities"/>
</dbReference>
<dbReference type="ChiTaRS" id="MYCBP2">
    <property type="organism name" value="human"/>
</dbReference>
<dbReference type="GeneWiki" id="MYCBP2"/>
<dbReference type="GenomeRNAi" id="23077"/>
<dbReference type="Pharos" id="O75592">
    <property type="development level" value="Tbio"/>
</dbReference>
<dbReference type="PRO" id="PR:O75592"/>
<dbReference type="Proteomes" id="UP000005640">
    <property type="component" value="Chromosome 13"/>
</dbReference>
<dbReference type="RNAct" id="O75592">
    <property type="molecule type" value="protein"/>
</dbReference>
<dbReference type="Bgee" id="ENSG00000005810">
    <property type="expression patterns" value="Expressed in Brodmann (1909) area 23 and 209 other cell types or tissues"/>
</dbReference>
<dbReference type="ExpressionAtlas" id="O75592">
    <property type="expression patterns" value="baseline and differential"/>
</dbReference>
<dbReference type="GO" id="GO:0030424">
    <property type="term" value="C:axon"/>
    <property type="evidence" value="ECO:0007669"/>
    <property type="project" value="UniProtKB-SubCell"/>
</dbReference>
<dbReference type="GO" id="GO:0005737">
    <property type="term" value="C:cytoplasm"/>
    <property type="evidence" value="ECO:0000305"/>
    <property type="project" value="UniProt"/>
</dbReference>
<dbReference type="GO" id="GO:0005829">
    <property type="term" value="C:cytosol"/>
    <property type="evidence" value="ECO:0000314"/>
    <property type="project" value="HPA"/>
</dbReference>
<dbReference type="GO" id="GO:0043231">
    <property type="term" value="C:intracellular membrane-bounded organelle"/>
    <property type="evidence" value="ECO:0000314"/>
    <property type="project" value="HPA"/>
</dbReference>
<dbReference type="GO" id="GO:0016020">
    <property type="term" value="C:membrane"/>
    <property type="evidence" value="ECO:0007005"/>
    <property type="project" value="UniProtKB"/>
</dbReference>
<dbReference type="GO" id="GO:0015630">
    <property type="term" value="C:microtubule cytoskeleton"/>
    <property type="evidence" value="ECO:0007669"/>
    <property type="project" value="Ensembl"/>
</dbReference>
<dbReference type="GO" id="GO:0005654">
    <property type="term" value="C:nucleoplasm"/>
    <property type="evidence" value="ECO:0000314"/>
    <property type="project" value="HPA"/>
</dbReference>
<dbReference type="GO" id="GO:0005634">
    <property type="term" value="C:nucleus"/>
    <property type="evidence" value="ECO:0000314"/>
    <property type="project" value="UniProtKB"/>
</dbReference>
<dbReference type="GO" id="GO:0005886">
    <property type="term" value="C:plasma membrane"/>
    <property type="evidence" value="ECO:0000318"/>
    <property type="project" value="GO_Central"/>
</dbReference>
<dbReference type="GO" id="GO:0005085">
    <property type="term" value="F:guanyl-nucleotide exchange factor activity"/>
    <property type="evidence" value="ECO:0000314"/>
    <property type="project" value="UniProtKB"/>
</dbReference>
<dbReference type="GO" id="GO:0042802">
    <property type="term" value="F:identical protein binding"/>
    <property type="evidence" value="ECO:0007669"/>
    <property type="project" value="Ensembl"/>
</dbReference>
<dbReference type="GO" id="GO:0031267">
    <property type="term" value="F:small GTPase binding"/>
    <property type="evidence" value="ECO:0000314"/>
    <property type="project" value="UniProtKB"/>
</dbReference>
<dbReference type="GO" id="GO:0061630">
    <property type="term" value="F:ubiquitin protein ligase activity"/>
    <property type="evidence" value="ECO:0000314"/>
    <property type="project" value="UniProtKB"/>
</dbReference>
<dbReference type="GO" id="GO:0008270">
    <property type="term" value="F:zinc ion binding"/>
    <property type="evidence" value="ECO:0000314"/>
    <property type="project" value="UniProtKB"/>
</dbReference>
<dbReference type="GO" id="GO:0007411">
    <property type="term" value="P:axon guidance"/>
    <property type="evidence" value="ECO:0000318"/>
    <property type="project" value="GO_Central"/>
</dbReference>
<dbReference type="GO" id="GO:0021785">
    <property type="term" value="P:branchiomotor neuron axon guidance"/>
    <property type="evidence" value="ECO:0007669"/>
    <property type="project" value="Ensembl"/>
</dbReference>
<dbReference type="GO" id="GO:0021952">
    <property type="term" value="P:central nervous system projection neuron axonogenesis"/>
    <property type="evidence" value="ECO:0000250"/>
    <property type="project" value="UniProtKB"/>
</dbReference>
<dbReference type="GO" id="GO:0032922">
    <property type="term" value="P:circadian regulation of gene expression"/>
    <property type="evidence" value="ECO:0000315"/>
    <property type="project" value="UniProtKB"/>
</dbReference>
<dbReference type="GO" id="GO:0042177">
    <property type="term" value="P:negative regulation of protein catabolic process"/>
    <property type="evidence" value="ECO:0007669"/>
    <property type="project" value="Ensembl"/>
</dbReference>
<dbReference type="GO" id="GO:0050905">
    <property type="term" value="P:neuromuscular process"/>
    <property type="evidence" value="ECO:0000250"/>
    <property type="project" value="UniProtKB"/>
</dbReference>
<dbReference type="GO" id="GO:0031398">
    <property type="term" value="P:positive regulation of protein ubiquitination"/>
    <property type="evidence" value="ECO:0000314"/>
    <property type="project" value="UniProtKB"/>
</dbReference>
<dbReference type="GO" id="GO:0070936">
    <property type="term" value="P:protein K48-linked ubiquitination"/>
    <property type="evidence" value="ECO:0000314"/>
    <property type="project" value="UniProt"/>
</dbReference>
<dbReference type="GO" id="GO:0016567">
    <property type="term" value="P:protein ubiquitination"/>
    <property type="evidence" value="ECO:0000314"/>
    <property type="project" value="UniProtKB"/>
</dbReference>
<dbReference type="GO" id="GO:1902667">
    <property type="term" value="P:regulation of axon guidance"/>
    <property type="evidence" value="ECO:0000250"/>
    <property type="project" value="UniProtKB"/>
</dbReference>
<dbReference type="GO" id="GO:0051493">
    <property type="term" value="P:regulation of cytoskeleton organization"/>
    <property type="evidence" value="ECO:0007669"/>
    <property type="project" value="Ensembl"/>
</dbReference>
<dbReference type="GO" id="GO:0032880">
    <property type="term" value="P:regulation of protein localization"/>
    <property type="evidence" value="ECO:0007669"/>
    <property type="project" value="Ensembl"/>
</dbReference>
<dbReference type="GO" id="GO:0008582">
    <property type="term" value="P:regulation of synaptic assembly at neuromuscular junction"/>
    <property type="evidence" value="ECO:0000318"/>
    <property type="project" value="GO_Central"/>
</dbReference>
<dbReference type="CDD" id="cd19799">
    <property type="entry name" value="Bbox2_MYCBP2"/>
    <property type="match status" value="1"/>
</dbReference>
<dbReference type="CDD" id="cd16463">
    <property type="entry name" value="RING-H2_PHR"/>
    <property type="match status" value="1"/>
</dbReference>
<dbReference type="FunFam" id="2.130.10.30:FF:000002">
    <property type="entry name" value="E3 ubiquitin-protein ligase MYCBP2 isoform X1"/>
    <property type="match status" value="1"/>
</dbReference>
<dbReference type="FunFam" id="2.60.120.260:FF:000011">
    <property type="entry name" value="E3 ubiquitin-protein ligase MYCBP2 isoform X1"/>
    <property type="match status" value="1"/>
</dbReference>
<dbReference type="FunFam" id="2.60.120.820:FF:000002">
    <property type="entry name" value="E3 ubiquitin-protein ligase MYCBP2 isoform X1"/>
    <property type="match status" value="1"/>
</dbReference>
<dbReference type="FunFam" id="3.30.40.10:FF:000078">
    <property type="entry name" value="E3 ubiquitin-protein ligase MYCBP2 isoform X1"/>
    <property type="match status" value="1"/>
</dbReference>
<dbReference type="FunFam" id="2.130.10.30:FF:000016">
    <property type="entry name" value="E3 ubiquitin-protein ligase MYCBP2 isoform X2"/>
    <property type="match status" value="1"/>
</dbReference>
<dbReference type="FunFam" id="2.60.120.820:FF:000003">
    <property type="entry name" value="E3 ubiquitin-protein ligase MYCBP2 isoform X2"/>
    <property type="match status" value="1"/>
</dbReference>
<dbReference type="Gene3D" id="2.60.120.260">
    <property type="entry name" value="Galactose-binding domain-like"/>
    <property type="match status" value="1"/>
</dbReference>
<dbReference type="Gene3D" id="2.60.40.10">
    <property type="entry name" value="Immunoglobulins"/>
    <property type="match status" value="1"/>
</dbReference>
<dbReference type="Gene3D" id="2.60.120.820">
    <property type="entry name" value="PHR domain"/>
    <property type="match status" value="2"/>
</dbReference>
<dbReference type="Gene3D" id="2.130.10.30">
    <property type="entry name" value="Regulator of chromosome condensation 1/beta-lactamase-inhibitor protein II"/>
    <property type="match status" value="2"/>
</dbReference>
<dbReference type="Gene3D" id="3.30.40.10">
    <property type="entry name" value="Zinc/RING finger domain, C3HC4 (zinc finger)"/>
    <property type="match status" value="1"/>
</dbReference>
<dbReference type="InterPro" id="IPR004939">
    <property type="entry name" value="APC_su10/DOC_dom"/>
</dbReference>
<dbReference type="InterPro" id="IPR017868">
    <property type="entry name" value="Filamin/ABP280_repeat-like"/>
</dbReference>
<dbReference type="InterPro" id="IPR008979">
    <property type="entry name" value="Galactose-bd-like_sf"/>
</dbReference>
<dbReference type="InterPro" id="IPR013783">
    <property type="entry name" value="Ig-like_fold"/>
</dbReference>
<dbReference type="InterPro" id="IPR014756">
    <property type="entry name" value="Ig_E-set"/>
</dbReference>
<dbReference type="InterPro" id="IPR012983">
    <property type="entry name" value="PHR"/>
</dbReference>
<dbReference type="InterPro" id="IPR038648">
    <property type="entry name" value="PHR_sf"/>
</dbReference>
<dbReference type="InterPro" id="IPR009091">
    <property type="entry name" value="RCC1/BLIP-II"/>
</dbReference>
<dbReference type="InterPro" id="IPR000408">
    <property type="entry name" value="Reg_chr_condens"/>
</dbReference>
<dbReference type="InterPro" id="IPR001841">
    <property type="entry name" value="Znf_RING"/>
</dbReference>
<dbReference type="InterPro" id="IPR013083">
    <property type="entry name" value="Znf_RING/FYVE/PHD"/>
</dbReference>
<dbReference type="PANTHER" id="PTHR45943">
    <property type="entry name" value="E3 UBIQUITIN-PROTEIN LIGASE MYCBP2"/>
    <property type="match status" value="1"/>
</dbReference>
<dbReference type="PANTHER" id="PTHR45943:SF1">
    <property type="entry name" value="E3 UBIQUITIN-PROTEIN LIGASE MYCBP2"/>
    <property type="match status" value="1"/>
</dbReference>
<dbReference type="Pfam" id="PF03256">
    <property type="entry name" value="ANAPC10"/>
    <property type="match status" value="1"/>
</dbReference>
<dbReference type="Pfam" id="PF08005">
    <property type="entry name" value="PHR"/>
    <property type="match status" value="2"/>
</dbReference>
<dbReference type="Pfam" id="PF00415">
    <property type="entry name" value="RCC1"/>
    <property type="match status" value="1"/>
</dbReference>
<dbReference type="Pfam" id="PF13540">
    <property type="entry name" value="RCC1_2"/>
    <property type="match status" value="1"/>
</dbReference>
<dbReference type="PRINTS" id="PR00633">
    <property type="entry name" value="RCCNDNSATION"/>
</dbReference>
<dbReference type="SMART" id="SM01337">
    <property type="entry name" value="APC10"/>
    <property type="match status" value="1"/>
</dbReference>
<dbReference type="SMART" id="SM00184">
    <property type="entry name" value="RING"/>
    <property type="match status" value="1"/>
</dbReference>
<dbReference type="SUPFAM" id="SSF81296">
    <property type="entry name" value="E set domains"/>
    <property type="match status" value="1"/>
</dbReference>
<dbReference type="SUPFAM" id="SSF49785">
    <property type="entry name" value="Galactose-binding domain-like"/>
    <property type="match status" value="1"/>
</dbReference>
<dbReference type="SUPFAM" id="SSF50985">
    <property type="entry name" value="RCC1/BLIP-II"/>
    <property type="match status" value="1"/>
</dbReference>
<dbReference type="SUPFAM" id="SSF57850">
    <property type="entry name" value="RING/U-box"/>
    <property type="match status" value="1"/>
</dbReference>
<dbReference type="PROSITE" id="PS51284">
    <property type="entry name" value="DOC"/>
    <property type="match status" value="1"/>
</dbReference>
<dbReference type="PROSITE" id="PS50194">
    <property type="entry name" value="FILAMIN_REPEAT"/>
    <property type="match status" value="1"/>
</dbReference>
<dbReference type="PROSITE" id="PS00626">
    <property type="entry name" value="RCC1_2"/>
    <property type="match status" value="2"/>
</dbReference>
<dbReference type="PROSITE" id="PS50012">
    <property type="entry name" value="RCC1_3"/>
    <property type="match status" value="3"/>
</dbReference>
<dbReference type="PROSITE" id="PS50089">
    <property type="entry name" value="ZF_RING_2"/>
    <property type="match status" value="1"/>
</dbReference>
<sequence length="4678" mass="513636">MMMCAATASPAAASSGLGGDGFYPAATFSSSPAPGALFMPVPDGSVAAAGLGLGLPAADSRGHYQLLLSGRALADRYRRIYTAALNDRDQGGGSAGHPASRNKKILNKKKLKRKQKSKSKVKTRSKSENLENTVIIPDIKLHSNPSAFNIYCNVRHCVLEWQKKEISLAAASKNSVQSGESDSDEEEESKEPPIKLPKIIEVGLCEVFELIKETRFSHPSLCLRSLQALLNVLQGQQPEGLQSEPPEVLESLFQLLLEITVRSTGMNDSTGQSLTALSCACLFSLVASWGETGRTLQAISAILTNNGSHACQTIQVPTILNSLQRSVQAVLVGKIQIQDWFSNGIKKAALMHKWPLKEISVDEDDQCLLQNDGFFLYLLCKDGLYKIGSGYSGTVRGHIYNSTSRIRNRKEKKSWLGYAQGYLLYRDVNNHSMTAIRISPETLEQDGTVMLPDCHTEGQNILFTDGEYINQIAASRDDGFVVRIFATSTEPVLQQELQLKLARKCLHACGISLFDLEKDLHIISTGFDEESAILGAGREFALMKTANGKIYYTGKYQSLGIKQGGPSAGKWVELPITKSPKIVHFSVGHDGSHALLVAEDGSIFFTGSASKGEDGESTKSRRQSKPYKPKKIIKMEGKIVVYTACNNGSSSVISKDGELYMFGKDAIYSDSSSLVTDLKGHFVTQVAMGKAHTCVLMKNGEVWTFGVNNKGQCGRDTGAMNQGGKGFGVENMATAMDEDLEEELDEKDEKSMMCPPGMHKWKLEQCMVCTVCGDCTGYGASCVSSGRPDRVPGGICGCGSGESGCAVCGCCKACARELDGQEARQRGILDAVKEMIPLDLLLAVPVPGVNIEEHLQLRQEEKRQRVIRRHRLEEGRGPLVFAGPIFMNHREQALARLRSHPAQLKHKRDKHKDGSGERGEKDASKITTYPPGSVRFDCELRAVQVSCGFHHSVVLMENGDVYTFGYGQHGQLGHGDVNSRGCPTLVQALPGPSTQVTAGSNHTAVLLMDGQVFTFGSFSKGQLGRPILDVPYWNAKPAPMPNIGSKYGRKATWIGASGDQTFLRIDEALINSHVLATSEIFASKHIIGLVPASISEPPPFKCLLINKVDGSCKTFNDSEQEDLQGFGVCLDPVYDVIWRFRPNTRELWCYNAVVADARLPSAADMQSRCSILSPELALPTGSRALTTRSHAALHILGCLDTLAAMQDLKMGVASTEEETQAVMKVYSKEDYSVVNRFESHGGGWGYSAHSVEAIRFSADTDILLGGLGLFGGRGEYTAKIKLFELGPDGGDHETDGDLLAETDVLAYDCAAREKYAMMFDEPVLLQAGWWYVAWARVSGPSSDCGSHGQASITTDDGVVFQFKSSKKSNNGTDVNAGQIPQLLYRLPTSDGSASKGKQQTSEPVHILKRSFARTVSVECFESLLSILHWSWTTLVLGVEELRGLKGFQFTATLLDLERLRFVGTCCLRLLRVYTCEIYPVSATGKAVVEETSKLAECIGKTRTLLRKILSEGVDHCMVKLDNDPQGYLSQPLSLLEAVLQECHNTFTACFHSFYPTPALQWACLCDLLNCLDQDIQEANFKTSSSRLLAAVMSALCHTSVKLTSIFPIAYDGEVLLRSIVKQVSTENDSTLVHRFPLLVAHMEKLSQSEENISGMTSFREVLEKMLVIVVLPVRNSLRRENELFSSHLVSNTCGLLASIVSELTASALGSEVDGLNSLHSVKASANRFTKTSQGRSWNTGNGSPDAICFSVDKPGIVVVGFSVYGGGGIHEYELEVLVDDSEHAGDSTHSHRWTSLELVKGTYTTDDSPSDIAEIRLDKVVPLKENVKYAVRLRNYGSRTANGDGGMTTVQCPDGVTFTFSTCSLSSNGTNQTRGQIPQILYYRSEFDGDLQSQLLSKANEEDKNCSRALSVVSTVVRASKDLLHRALAVDADDIPELLSSSSLFSMLLPLIIAYIGPVAAAIPKVAVEVFGLVQQLLPSVAILNQKYAPPAFNPNQSTDSTTGNQPEQGLSACTTSSHYAVIESEHPYKPACVMHYKVTFPECVRWMTIEFDPQCGTAQSEDVLRLLIPVRTVQNSGYGPKLTSVHENLNSWIELKKFSGSSGWPTMVLVLPGNEALFSLETASDYVKDDKASFYGFKCFAIGYEFSPGPDEGVIQLEKELANLGGVCAAALMKKDLALPIGNELEEDLEILEEAALQVCKTHSGILGKGLALSHSPTILEALEGNLPLQIQSNEQSFLDDFIACVPGSSGGRLARWLQPDSYADPQKTSLILNKDDIRCGWPTTITVQTKDQYGDVVHVPNMKVEVKAVPVSQKKMSLQQDQAKKPQRIPGSPAVTAASSNTDMTYGGLASPKLDVSYEPMIVKEARYIAITMMKVYENYSFEELRFASPTPKRPSENMLIRVNNDGTYCANWTPGAIGLYTLHVTIDGIEIDAGLEVKVKDPPKGMIPPGTQLVKPKSEPQPNKVRKFVAKDSAGLRIRSHPSLQSEQIGIVKVNGTITFIDEIHNDDGVWLRLNDETIKKYVPNMNGYTEAWCLSFNQHLGKSLLVPVDESKTNTDDFFKDINSCCPQEATMQEQDMPFLRGGPGMYKVVKTGPSGHNIRSCPNLRGIPIGMLVLGNKVKAVGEVTNSEGTWVQLDQNSMVEFCESDEGEAWSLARDRGGNQYLRHEDEQALLDQNSQTPPPSPFSVQAFNKGASCSAQGFDYGLGNSKGDRGNISTSSKPASTSGKSELSSKHSRSLKPDGRMSRTTADQKKPRGTESLSASESLILKSDAAKLRSDSHSRSLSPNHNTLQTLKSDGRMPSSSRAESPGPGSRLSSPKPKTLPANRSSPSGASSPRSSSPHDKNLPQKSTAPVKTKLDPPRERSKSDSYTLDPDTLRKKKMPLTEPLRGRSTSPKPKSVPKDSTDSPGSENRAPSPHVVQENLHSEVVEVCTSSTLKTNSLTDSTCDDSSEFKSVDEGSNKVHFSIGKAPLKDEQEMRASPKISRKCANRHTRPKKEKSSFLFKGDGSKPLEPAKQAMSPSVAECARAVFASFLWHEGIVHDAMACSSFLKFHPELSKEHAPIRSSLNSQQPTEEKETKLKNRHSLEISSALNMFNIAPHGPDISKMGSINKNKVLSMLKEPPLHEKCEDGKTETTFEMSMHNTMKSKSPLPLTLQHLVAFWEDISLATIKAASQNMIFPSPGSCAVLKKKECEKENKKSKKEKKKKEKAEVRPRGNLFGEMAQLAVGGPEKDTICELCGESHPYPVTYHMRQAHPGCGRYAGGQGYNSIGHFCGGWAGNCGDGGIGGSTWYLVCDRCREKYLREKQAAAREKVKQSRRKPMQVKTPRALPTMEAHQVIKANALFLLSLSSAAEPSILCYHPAKPFQSQLPSVKEGISEDLPVKMPCLYLQTLARHHHENFVGYQDDNLFQDEMRYLRSTSVPAPYISVTPDASPNVFEEPESNMKSMPPSLETSPITDTDLAKRTVFQRSYSVVASEYDKQHSILPARVKAIPRRRVNSGDTEVGSSLLRHPSPELSRLISAHSSLSKGERNFQWPVLAFVIQHHDLEGLEIAMKQALRKSACRVFAMEAFNWLLCNVIQTTSLHDILWHFVASLTPAPVEPEEEEDEENKTSKENSEQEKDTRVCEHPLSDIVIAGEAAHPLPHTFHRLLQTISDLMMSLPSGSSLQQMALRCWSLKFKQSDHQFLHQSNVFHHINNILSKSDDGDSEESFSISIQSGFEAMSQELCIVMCLKDLTSIVDIKTSSRPAMIGSLTDGSTETFWESGDEDKNKTKNITINCVKGINARYVSVHVDNSRDLGNKVTSMTFLTGKAVEDLCRIKQVDLDSRHIGWVTSELPGGDNHIIKIELKGPENTLRVRQVKVLGWKDGESTKIAGQISASVAQQRNCEAETLRVFRLITSQVFGKLISGDAEPTPEQEEKALLSSPEGEEKVYNATSDADLKEHMVGIIFSRSKLTNLQKQVCAHIVQAIRMEATRVREEWEHAISSKENANSQPNDEDASSDAYCFELLSMVLALSGSNVGRQYLAQQLTLLQDLFSLLHTASPRVQRQVTSLLRRVLPEVTPSRLASIIGVKSLPPADISDIIHSTEKGDWNKLGILDMFLGCIAKALTVQLKAKGTTITGTAGTTVGKGVTTVTLPMIFNSSYLRRGESHWWMKGSTPTQISEIIIKLIKDMAAGHLSEAWSRVTKNAIAETIIALTKMEEEFRSPVRCIATTRLWLALASLCVLDQDHVDRLSSGRWMGKDGQQKQMPMCDNHDDGETAAIILCNVCGNLCTDCDRFLHLHRRTKTHQRQVFKEEEEAIKVDLHEGCGRTKLFWLMALADSKTMKAMVEFREHTGKPTTSSSEACRFCGSRSGTELSAVGSVCSDADCQEYAKIACSKTHPCGHPCGGVKNEEHCLPCLHGCDKSATSLKQDADDMCMICFTEALSAAPAIQLDCSHIFHLQCCRRVLENRWLGPRITFGFISCPICKNKINHIVLKDLLDPIKELYEDVRRKALMRLEYEGLHKSEAITTPGVRFYNDPAGYAMNRYAYYVCYKCRKAYFGGEARCDAEAGRGDDYDPRELICGACSDVSRAQMCPKHGTDFLEYKCRYCCSVAVFFCFGTTHFCNACHDDFQRMTSIPKEELPHCPAGPKGKQLEGTECPLHVVHPPTGEEFALGCGVCRNAHTF</sequence>
<name>MYCB2_HUMAN</name>
<reference key="1">
    <citation type="journal article" date="1998" name="Proc. Natl. Acad. Sci. U.S.A.">
        <title>Identification of a large Myc-binding protein that contains RCC1-like repeats.</title>
        <authorList>
            <person name="Guo Q."/>
            <person name="Xie J."/>
            <person name="Dang C.V."/>
            <person name="Liu E.T."/>
            <person name="Bishop J.M."/>
        </authorList>
    </citation>
    <scope>NUCLEOTIDE SEQUENCE [MRNA] (ISOFORM 1)</scope>
    <scope>FUNCTION</scope>
    <scope>INTERACTION WITH MYC</scope>
    <scope>SUBCELLULAR LOCATION</scope>
    <scope>TISSUE SPECIFICITY</scope>
</reference>
<reference key="2">
    <citation type="journal article" date="2004" name="Nature">
        <title>The DNA sequence and analysis of human chromosome 13.</title>
        <authorList>
            <person name="Dunham A."/>
            <person name="Matthews L.H."/>
            <person name="Burton J."/>
            <person name="Ashurst J.L."/>
            <person name="Howe K.L."/>
            <person name="Ashcroft K.J."/>
            <person name="Beare D.M."/>
            <person name="Burford D.C."/>
            <person name="Hunt S.E."/>
            <person name="Griffiths-Jones S."/>
            <person name="Jones M.C."/>
            <person name="Keenan S.J."/>
            <person name="Oliver K."/>
            <person name="Scott C.E."/>
            <person name="Ainscough R."/>
            <person name="Almeida J.P."/>
            <person name="Ambrose K.D."/>
            <person name="Andrews D.T."/>
            <person name="Ashwell R.I.S."/>
            <person name="Babbage A.K."/>
            <person name="Bagguley C.L."/>
            <person name="Bailey J."/>
            <person name="Bannerjee R."/>
            <person name="Barlow K.F."/>
            <person name="Bates K."/>
            <person name="Beasley H."/>
            <person name="Bird C.P."/>
            <person name="Bray-Allen S."/>
            <person name="Brown A.J."/>
            <person name="Brown J.Y."/>
            <person name="Burrill W."/>
            <person name="Carder C."/>
            <person name="Carter N.P."/>
            <person name="Chapman J.C."/>
            <person name="Clamp M.E."/>
            <person name="Clark S.Y."/>
            <person name="Clarke G."/>
            <person name="Clee C.M."/>
            <person name="Clegg S.C."/>
            <person name="Cobley V."/>
            <person name="Collins J.E."/>
            <person name="Corby N."/>
            <person name="Coville G.J."/>
            <person name="Deloukas P."/>
            <person name="Dhami P."/>
            <person name="Dunham I."/>
            <person name="Dunn M."/>
            <person name="Earthrowl M.E."/>
            <person name="Ellington A.G."/>
            <person name="Faulkner L."/>
            <person name="Frankish A.G."/>
            <person name="Frankland J."/>
            <person name="French L."/>
            <person name="Garner P."/>
            <person name="Garnett J."/>
            <person name="Gilbert J.G.R."/>
            <person name="Gilson C.J."/>
            <person name="Ghori J."/>
            <person name="Grafham D.V."/>
            <person name="Gribble S.M."/>
            <person name="Griffiths C."/>
            <person name="Hall R.E."/>
            <person name="Hammond S."/>
            <person name="Harley J.L."/>
            <person name="Hart E.A."/>
            <person name="Heath P.D."/>
            <person name="Howden P.J."/>
            <person name="Huckle E.J."/>
            <person name="Hunt P.J."/>
            <person name="Hunt A.R."/>
            <person name="Johnson C."/>
            <person name="Johnson D."/>
            <person name="Kay M."/>
            <person name="Kimberley A.M."/>
            <person name="King A."/>
            <person name="Laird G.K."/>
            <person name="Langford C.J."/>
            <person name="Lawlor S."/>
            <person name="Leongamornlert D.A."/>
            <person name="Lloyd D.M."/>
            <person name="Lloyd C."/>
            <person name="Loveland J.E."/>
            <person name="Lovell J."/>
            <person name="Martin S."/>
            <person name="Mashreghi-Mohammadi M."/>
            <person name="McLaren S.J."/>
            <person name="McMurray A."/>
            <person name="Milne S."/>
            <person name="Moore M.J.F."/>
            <person name="Nickerson T."/>
            <person name="Palmer S.A."/>
            <person name="Pearce A.V."/>
            <person name="Peck A.I."/>
            <person name="Pelan S."/>
            <person name="Phillimore B."/>
            <person name="Porter K.M."/>
            <person name="Rice C.M."/>
            <person name="Searle S."/>
            <person name="Sehra H.K."/>
            <person name="Shownkeen R."/>
            <person name="Skuce C.D."/>
            <person name="Smith M."/>
            <person name="Steward C.A."/>
            <person name="Sycamore N."/>
            <person name="Tester J."/>
            <person name="Thomas D.W."/>
            <person name="Tracey A."/>
            <person name="Tromans A."/>
            <person name="Tubby B."/>
            <person name="Wall M."/>
            <person name="Wallis J.M."/>
            <person name="West A.P."/>
            <person name="Whitehead S.L."/>
            <person name="Willey D.L."/>
            <person name="Wilming L."/>
            <person name="Wray P.W."/>
            <person name="Wright M.W."/>
            <person name="Young L."/>
            <person name="Coulson A."/>
            <person name="Durbin R.M."/>
            <person name="Hubbard T."/>
            <person name="Sulston J.E."/>
            <person name="Beck S."/>
            <person name="Bentley D.R."/>
            <person name="Rogers J."/>
            <person name="Ross M.T."/>
        </authorList>
    </citation>
    <scope>NUCLEOTIDE SEQUENCE [LARGE SCALE GENOMIC DNA] (ISOFORM 2)</scope>
</reference>
<reference key="3">
    <citation type="submission" date="2005-07" db="EMBL/GenBank/DDBJ databases">
        <authorList>
            <person name="Mural R.J."/>
            <person name="Istrail S."/>
            <person name="Sutton G.G."/>
            <person name="Florea L."/>
            <person name="Halpern A.L."/>
            <person name="Mobarry C.M."/>
            <person name="Lippert R."/>
            <person name="Walenz B."/>
            <person name="Shatkay H."/>
            <person name="Dew I."/>
            <person name="Miller J.R."/>
            <person name="Flanigan M.J."/>
            <person name="Edwards N.J."/>
            <person name="Bolanos R."/>
            <person name="Fasulo D."/>
            <person name="Halldorsson B.V."/>
            <person name="Hannenhalli S."/>
            <person name="Turner R."/>
            <person name="Yooseph S."/>
            <person name="Lu F."/>
            <person name="Nusskern D.R."/>
            <person name="Shue B.C."/>
            <person name="Zheng X.H."/>
            <person name="Zhong F."/>
            <person name="Delcher A.L."/>
            <person name="Huson D.H."/>
            <person name="Kravitz S.A."/>
            <person name="Mouchard L."/>
            <person name="Reinert K."/>
            <person name="Remington K.A."/>
            <person name="Clark A.G."/>
            <person name="Waterman M.S."/>
            <person name="Eichler E.E."/>
            <person name="Adams M.D."/>
            <person name="Hunkapiller M.W."/>
            <person name="Myers E.W."/>
            <person name="Venter J.C."/>
        </authorList>
    </citation>
    <scope>NUCLEOTIDE SEQUENCE [LARGE SCALE GENOMIC DNA]</scope>
</reference>
<reference key="4">
    <citation type="journal article" date="1998" name="DNA Res.">
        <title>Prediction of the coding sequences of unidentified human genes. XII. The complete sequences of 100 new cDNA clones from brain which code for large proteins in vitro.</title>
        <authorList>
            <person name="Nagase T."/>
            <person name="Ishikawa K."/>
            <person name="Suyama M."/>
            <person name="Kikuno R."/>
            <person name="Hirosawa M."/>
            <person name="Miyajima N."/>
            <person name="Tanaka A."/>
            <person name="Kotani H."/>
            <person name="Nomura N."/>
            <person name="Ohara O."/>
        </authorList>
    </citation>
    <scope>NUCLEOTIDE SEQUENCE [LARGE SCALE MRNA] OF 3469-4678 (ISOFORM 1)</scope>
    <source>
        <tissue evidence="7">Brain</tissue>
    </source>
</reference>
<reference key="5">
    <citation type="journal article" date="2002" name="DNA Res.">
        <title>Construction of expression-ready cDNA clones for KIAA genes: manual curation of 330 KIAA cDNA clones.</title>
        <authorList>
            <person name="Nakajima D."/>
            <person name="Okazaki N."/>
            <person name="Yamakawa H."/>
            <person name="Kikuno R."/>
            <person name="Ohara O."/>
            <person name="Nagase T."/>
        </authorList>
    </citation>
    <scope>SEQUENCE REVISION</scope>
</reference>
<reference key="6">
    <citation type="journal article" date="2004" name="Genome Res.">
        <title>The status, quality, and expansion of the NIH full-length cDNA project: the Mammalian Gene Collection (MGC).</title>
        <authorList>
            <consortium name="The MGC Project Team"/>
        </authorList>
    </citation>
    <scope>NUCLEOTIDE SEQUENCE [LARGE SCALE MRNA] OF 3827-4678 (ISOFORM 1)</scope>
    <source>
        <tissue evidence="23">Brain</tissue>
    </source>
</reference>
<reference key="7">
    <citation type="journal article" date="2000" name="Genome Res.">
        <title>Cloning and functional analysis of cDNAs with open reading frames for 300 previously undefined genes expressed in CD34+ hematopoietic stem/progenitor cells.</title>
        <authorList>
            <person name="Zhang Q.-H."/>
            <person name="Ye M."/>
            <person name="Wu X.-Y."/>
            <person name="Ren S.-X."/>
            <person name="Zhao M."/>
            <person name="Zhao C.-J."/>
            <person name="Fu G."/>
            <person name="Shen Y."/>
            <person name="Fan H.-Y."/>
            <person name="Lu G."/>
            <person name="Zhong M."/>
            <person name="Xu X.-R."/>
            <person name="Han Z.-G."/>
            <person name="Zhang J.-W."/>
            <person name="Tao J."/>
            <person name="Huang Q.-H."/>
            <person name="Zhou J."/>
            <person name="Hu G.-X."/>
            <person name="Gu J."/>
            <person name="Chen S.-J."/>
            <person name="Chen Z."/>
        </authorList>
    </citation>
    <scope>NUCLEOTIDE SEQUENCE [LARGE SCALE MRNA] OF 4405-4678</scope>
    <source>
        <tissue evidence="8">Umbilical cord blood</tissue>
    </source>
</reference>
<reference key="8">
    <citation type="journal article" date="2004" name="J. Biol. Chem.">
        <title>Pam and its ortholog highwire interact with and may negatively regulate the TSC1.TSC2 complex.</title>
        <authorList>
            <person name="Murthy V."/>
            <person name="Han S."/>
            <person name="Beauchamp R.L."/>
            <person name="Smith N."/>
            <person name="Haddad L.A."/>
            <person name="Ito N."/>
            <person name="Ramesh V."/>
        </authorList>
    </citation>
    <scope>INTERACTION WITH TSC2</scope>
</reference>
<reference key="9">
    <citation type="journal article" date="2006" name="Cell">
        <title>Global, in vivo, and site-specific phosphorylation dynamics in signaling networks.</title>
        <authorList>
            <person name="Olsen J.V."/>
            <person name="Blagoev B."/>
            <person name="Gnad F."/>
            <person name="Macek B."/>
            <person name="Kumar C."/>
            <person name="Mortensen P."/>
            <person name="Mann M."/>
        </authorList>
    </citation>
    <scope>PHOSPHORYLATION [LARGE SCALE ANALYSIS] AT SER-3090</scope>
    <scope>IDENTIFICATION BY MASS SPECTROMETRY [LARGE SCALE ANALYSIS]</scope>
    <source>
        <tissue>Cervix carcinoma</tissue>
    </source>
</reference>
<reference key="10">
    <citation type="journal article" date="2008" name="Cell. Signal.">
        <title>Pam (Protein associated with Myc) functions as an E3 ubiquitin ligase and regulates TSC/mTOR signaling.</title>
        <authorList>
            <person name="Han S."/>
            <person name="Witt R.M."/>
            <person name="Santos T.M."/>
            <person name="Polizzano C."/>
            <person name="Sabatini B.L."/>
            <person name="Ramesh V."/>
        </authorList>
    </citation>
    <scope>FUNCTION</scope>
    <scope>AUTOUBIQUITINATION</scope>
</reference>
<reference key="11">
    <citation type="journal article" date="2008" name="Mol. Cell">
        <title>Kinase-selective enrichment enables quantitative phosphoproteomics of the kinome across the cell cycle.</title>
        <authorList>
            <person name="Daub H."/>
            <person name="Olsen J.V."/>
            <person name="Bairlein M."/>
            <person name="Gnad F."/>
            <person name="Oppermann F.S."/>
            <person name="Korner R."/>
            <person name="Greff Z."/>
            <person name="Keri G."/>
            <person name="Stemmann O."/>
            <person name="Mann M."/>
        </authorList>
    </citation>
    <scope>PHOSPHORYLATION [LARGE SCALE ANALYSIS] AT SER-3505</scope>
    <scope>IDENTIFICATION BY MASS SPECTROMETRY [LARGE SCALE ANALYSIS]</scope>
    <source>
        <tissue>Cervix carcinoma</tissue>
    </source>
</reference>
<reference key="12">
    <citation type="journal article" date="2008" name="Proc. Natl. Acad. Sci. U.S.A.">
        <title>A quantitative atlas of mitotic phosphorylation.</title>
        <authorList>
            <person name="Dephoure N."/>
            <person name="Zhou C."/>
            <person name="Villen J."/>
            <person name="Beausoleil S.A."/>
            <person name="Bakalarski C.E."/>
            <person name="Elledge S.J."/>
            <person name="Gygi S.P."/>
        </authorList>
    </citation>
    <scope>PHOSPHORYLATION [LARGE SCALE ANALYSIS] AT SER-178; SER-181; SER-183; THR-2683; SER-2789; SER-3478 AND SER-3505</scope>
    <scope>IDENTIFICATION BY MASS SPECTROMETRY [LARGE SCALE ANALYSIS]</scope>
    <source>
        <tissue>Cervix carcinoma</tissue>
    </source>
</reference>
<reference key="13">
    <citation type="journal article" date="2009" name="Anal. Chem.">
        <title>Lys-N and trypsin cover complementary parts of the phosphoproteome in a refined SCX-based approach.</title>
        <authorList>
            <person name="Gauci S."/>
            <person name="Helbig A.O."/>
            <person name="Slijper M."/>
            <person name="Krijgsveld J."/>
            <person name="Heck A.J."/>
            <person name="Mohammed S."/>
        </authorList>
    </citation>
    <scope>IDENTIFICATION BY MASS SPECTROMETRY [LARGE SCALE ANALYSIS]</scope>
</reference>
<reference key="14">
    <citation type="journal article" date="2009" name="Mol. Cell. Biol.">
        <title>Fbxo45 forms a novel ubiquitin ligase complex and is required for neuronal development.</title>
        <authorList>
            <person name="Saiga T."/>
            <person name="Fukuda T."/>
            <person name="Matsumoto M."/>
            <person name="Tada H."/>
            <person name="Okano H.J."/>
            <person name="Okano H."/>
            <person name="Nakayama K.I."/>
        </authorList>
    </citation>
    <scope>IDENTIFICATION BY MASS SPECTROMETRY</scope>
    <scope>INTERACTION WITH FBXO45</scope>
</reference>
<reference key="15">
    <citation type="journal article" date="2009" name="Mol. Cell. Proteomics">
        <title>Large-scale proteomics analysis of the human kinome.</title>
        <authorList>
            <person name="Oppermann F.S."/>
            <person name="Gnad F."/>
            <person name="Olsen J.V."/>
            <person name="Hornberger R."/>
            <person name="Greff Z."/>
            <person name="Keri G."/>
            <person name="Mann M."/>
            <person name="Daub H."/>
        </authorList>
    </citation>
    <scope>PHOSPHORYLATION [LARGE SCALE ANALYSIS] AT SER-3505</scope>
    <scope>IDENTIFICATION BY MASS SPECTROMETRY [LARGE SCALE ANALYSIS]</scope>
</reference>
<reference key="16">
    <citation type="journal article" date="2009" name="Sci. Signal.">
        <title>Quantitative phosphoproteomic analysis of T cell receptor signaling reveals system-wide modulation of protein-protein interactions.</title>
        <authorList>
            <person name="Mayya V."/>
            <person name="Lundgren D.H."/>
            <person name="Hwang S.-I."/>
            <person name="Rezaul K."/>
            <person name="Wu L."/>
            <person name="Eng J.K."/>
            <person name="Rodionov V."/>
            <person name="Han D.K."/>
        </authorList>
    </citation>
    <scope>PHOSPHORYLATION [LARGE SCALE ANALYSIS] AT THR-2683; SER-2920 AND SER-3505</scope>
    <scope>IDENTIFICATION BY MASS SPECTROMETRY [LARGE SCALE ANALYSIS]</scope>
    <source>
        <tissue>Leukemic T-cell</tissue>
    </source>
</reference>
<reference key="17">
    <citation type="journal article" date="2010" name="Proc. Natl. Acad. Sci. U.S.A.">
        <title>E3 ligases Arf-bp1 and Pam mediate lithium-stimulated degradation of the circadian heme receptor Rev-erb alpha.</title>
        <authorList>
            <person name="Yin L."/>
            <person name="Joshi S."/>
            <person name="Wu N."/>
            <person name="Tong X."/>
            <person name="Lazar M.A."/>
        </authorList>
    </citation>
    <scope>FUNCTION</scope>
</reference>
<reference key="18">
    <citation type="journal article" date="2010" name="Sci. Signal.">
        <title>Quantitative phosphoproteomics reveals widespread full phosphorylation site occupancy during mitosis.</title>
        <authorList>
            <person name="Olsen J.V."/>
            <person name="Vermeulen M."/>
            <person name="Santamaria A."/>
            <person name="Kumar C."/>
            <person name="Miller M.L."/>
            <person name="Jensen L.J."/>
            <person name="Gnad F."/>
            <person name="Cox J."/>
            <person name="Jensen T.S."/>
            <person name="Nigg E.A."/>
            <person name="Brunak S."/>
            <person name="Mann M."/>
        </authorList>
    </citation>
    <scope>PHOSPHORYLATION [LARGE SCALE ANALYSIS] AT THR-2683 AND SER-3505</scope>
    <scope>IDENTIFICATION BY MASS SPECTROMETRY [LARGE SCALE ANALYSIS]</scope>
    <source>
        <tissue>Cervix carcinoma</tissue>
    </source>
</reference>
<reference key="19">
    <citation type="journal article" date="2011" name="BMC Syst. Biol.">
        <title>Initial characterization of the human central proteome.</title>
        <authorList>
            <person name="Burkard T.R."/>
            <person name="Planyavsky M."/>
            <person name="Kaupe I."/>
            <person name="Breitwieser F.P."/>
            <person name="Buerckstuemmer T."/>
            <person name="Bennett K.L."/>
            <person name="Superti-Furga G."/>
            <person name="Colinge J."/>
        </authorList>
    </citation>
    <scope>IDENTIFICATION BY MASS SPECTROMETRY [LARGE SCALE ANALYSIS]</scope>
</reference>
<reference key="20">
    <citation type="journal article" date="2011" name="Sci. Signal.">
        <title>System-wide temporal characterization of the proteome and phosphoproteome of human embryonic stem cell differentiation.</title>
        <authorList>
            <person name="Rigbolt K.T."/>
            <person name="Prokhorova T.A."/>
            <person name="Akimov V."/>
            <person name="Henningsen J."/>
            <person name="Johansen P.T."/>
            <person name="Kratchmarova I."/>
            <person name="Kassem M."/>
            <person name="Mann M."/>
            <person name="Olsen J.V."/>
            <person name="Blagoev B."/>
        </authorList>
    </citation>
    <scope>IDENTIFICATION BY MASS SPECTROMETRY [LARGE SCALE ANALYSIS]</scope>
</reference>
<reference key="21">
    <citation type="journal article" date="2012" name="J. Neurosci.">
        <title>RAE-1, a novel PHR binding protein, is required for axon termination and synapse formation in Caenorhabditis elegans.</title>
        <authorList>
            <person name="Grill B."/>
            <person name="Chen L."/>
            <person name="Tulgren E.D."/>
            <person name="Baker S.T."/>
            <person name="Bienvenut W."/>
            <person name="Anderson M."/>
            <person name="Quadroni M."/>
            <person name="Jin Y."/>
            <person name="Garner C.C."/>
        </authorList>
    </citation>
    <scope>INTERACTION WITH RAE1</scope>
</reference>
<reference key="22">
    <citation type="journal article" date="2013" name="J. Proteome Res.">
        <title>Toward a comprehensive characterization of a human cancer cell phosphoproteome.</title>
        <authorList>
            <person name="Zhou H."/>
            <person name="Di Palma S."/>
            <person name="Preisinger C."/>
            <person name="Peng M."/>
            <person name="Polat A.N."/>
            <person name="Heck A.J."/>
            <person name="Mohammed S."/>
        </authorList>
    </citation>
    <scope>PHOSPHORYLATION [LARGE SCALE ANALYSIS] AT SER-127; SER-1624; THR-2683; SER-2769; SER-2787; SER-2789; SER-2833; SER-2839; SER-2871; SER-2985; SER-3505; SER-3931 AND SER-3932</scope>
    <scope>IDENTIFICATION BY MASS SPECTROMETRY [LARGE SCALE ANALYSIS]</scope>
    <source>
        <tissue>Cervix carcinoma</tissue>
        <tissue>Erythroleukemia</tissue>
    </source>
</reference>
<reference key="23">
    <citation type="journal article" date="2014" name="J. Proteomics">
        <title>An enzyme assisted RP-RPLC approach for in-depth analysis of human liver phosphoproteome.</title>
        <authorList>
            <person name="Bian Y."/>
            <person name="Song C."/>
            <person name="Cheng K."/>
            <person name="Dong M."/>
            <person name="Wang F."/>
            <person name="Huang J."/>
            <person name="Sun D."/>
            <person name="Wang L."/>
            <person name="Ye M."/>
            <person name="Zou H."/>
        </authorList>
    </citation>
    <scope>PHOSPHORYLATION [LARGE SCALE ANALYSIS] AT SER-3478</scope>
    <scope>IDENTIFICATION BY MASS SPECTROMETRY [LARGE SCALE ANALYSIS]</scope>
    <source>
        <tissue>Liver</tissue>
    </source>
</reference>
<reference key="24">
    <citation type="journal article" date="2015" name="J. Biol. Chem.">
        <title>MYCBP2 is a guanosine exchange factor for Ran protein and determines its localization in neurons of dorsal root ganglia.</title>
        <authorList>
            <person name="Doerr A."/>
            <person name="Pierre S."/>
            <person name="Zhang D.D."/>
            <person name="Henke M."/>
            <person name="Holland S."/>
            <person name="Scholich K."/>
        </authorList>
    </citation>
    <scope>FUNCTION</scope>
    <scope>INTERACTION WITH RAN AND RANGAP1</scope>
    <scope>SUBCELLULAR LOCATION</scope>
</reference>
<reference key="25">
    <citation type="journal article" date="2016" name="Nat. Commun.">
        <title>The Parkinson's disease-associated genes ATP13A2 and SYT11 regulate autophagy via a common pathway.</title>
        <authorList>
            <person name="Bento C.F."/>
            <person name="Ashkenazi A."/>
            <person name="Jimenez-Sanchez M."/>
            <person name="Rubinsztein D.C."/>
        </authorList>
    </citation>
    <scope>INTERACTION WITH ATP13A2</scope>
</reference>
<reference key="26">
    <citation type="journal article" date="2018" name="PLoS ONE">
        <title>USP11 deubiquitinates RAE1 and plays a key role in bipolar spindle formation.</title>
        <authorList>
            <person name="Stockum A."/>
            <person name="Snijders A.P."/>
            <person name="Maertens G.N."/>
        </authorList>
    </citation>
    <scope>INTERACTION WITH USP11</scope>
</reference>
<reference key="27">
    <citation type="journal article" date="2018" name="Nature">
        <title>Activity-based E3 ligase profiling uncovers an E3 ligase with esterification activity.</title>
        <authorList>
            <person name="Pao K.C."/>
            <person name="Wood N.T."/>
            <person name="Knebel A."/>
            <person name="Rafie K."/>
            <person name="Stanley M."/>
            <person name="Mabbitt P.D."/>
            <person name="Sundaramoorthy R."/>
            <person name="Hofmann K."/>
            <person name="van Aalten D.M.F."/>
            <person name="Virdee S."/>
        </authorList>
    </citation>
    <scope>X-RAY CRYSTALLOGRAPHY (1.75 ANGSTROMS) OF 4416-4678 IN COMPLEX WITH ZINC</scope>
    <scope>FUNCTION</scope>
    <scope>CATALYTIC ACTIVITY</scope>
    <scope>ACTIVE SITES</scope>
    <scope>ZINC-BINDING</scope>
    <scope>MUTAGENESIS OF CYS-4558; GLU-4572; CYS-4610; PHE-4611; PHE-4616; HIS-4621 AND PHE-4624</scope>
</reference>
<keyword id="KW-0002">3D-structure</keyword>
<keyword id="KW-0025">Alternative splicing</keyword>
<keyword id="KW-0090">Biological rhythms</keyword>
<keyword id="KW-0966">Cell projection</keyword>
<keyword id="KW-0963">Cytoplasm</keyword>
<keyword id="KW-0206">Cytoskeleton</keyword>
<keyword id="KW-1015">Disulfide bond</keyword>
<keyword id="KW-0344">Guanine-nucleotide releasing factor</keyword>
<keyword id="KW-0479">Metal-binding</keyword>
<keyword id="KW-0539">Nucleus</keyword>
<keyword id="KW-0597">Phosphoprotein</keyword>
<keyword id="KW-1267">Proteomics identification</keyword>
<keyword id="KW-1185">Reference proteome</keyword>
<keyword id="KW-0677">Repeat</keyword>
<keyword id="KW-0808">Transferase</keyword>
<keyword id="KW-0832">Ubl conjugation</keyword>
<keyword id="KW-0833">Ubl conjugation pathway</keyword>
<keyword id="KW-0862">Zinc</keyword>
<keyword id="KW-0863">Zinc-finger</keyword>
<evidence type="ECO:0000250" key="1"/>
<evidence type="ECO:0000250" key="2">
    <source>
        <dbReference type="UniProtKB" id="Q7TPH6"/>
    </source>
</evidence>
<evidence type="ECO:0000255" key="3"/>
<evidence type="ECO:0000255" key="4">
    <source>
        <dbReference type="PROSITE-ProRule" id="PRU00175"/>
    </source>
</evidence>
<evidence type="ECO:0000255" key="5">
    <source>
        <dbReference type="PROSITE-ProRule" id="PRU00614"/>
    </source>
</evidence>
<evidence type="ECO:0000256" key="6">
    <source>
        <dbReference type="SAM" id="MobiDB-lite"/>
    </source>
</evidence>
<evidence type="ECO:0000269" key="7">
    <source>
    </source>
</evidence>
<evidence type="ECO:0000269" key="8">
    <source>
    </source>
</evidence>
<evidence type="ECO:0000269" key="9">
    <source>
    </source>
</evidence>
<evidence type="ECO:0000269" key="10">
    <source>
    </source>
</evidence>
<evidence type="ECO:0000269" key="11">
    <source>
    </source>
</evidence>
<evidence type="ECO:0000269" key="12">
    <source>
    </source>
</evidence>
<evidence type="ECO:0000269" key="13">
    <source>
    </source>
</evidence>
<evidence type="ECO:0000269" key="14">
    <source>
    </source>
</evidence>
<evidence type="ECO:0000269" key="15">
    <source>
    </source>
</evidence>
<evidence type="ECO:0000269" key="16">
    <source>
    </source>
</evidence>
<evidence type="ECO:0000269" key="17">
    <source>
    </source>
</evidence>
<evidence type="ECO:0000269" key="18">
    <source>
    </source>
</evidence>
<evidence type="ECO:0000303" key="19">
    <source>
    </source>
</evidence>
<evidence type="ECO:0000303" key="20">
    <source>
    </source>
</evidence>
<evidence type="ECO:0000305" key="21"/>
<evidence type="ECO:0000305" key="22">
    <source>
    </source>
</evidence>
<evidence type="ECO:0000312" key="23">
    <source>
        <dbReference type="EMBL" id="AAH37971.1"/>
    </source>
</evidence>
<evidence type="ECO:0000312" key="24">
    <source>
        <dbReference type="HGNC" id="HGNC:23386"/>
    </source>
</evidence>
<evidence type="ECO:0007744" key="25">
    <source>
        <dbReference type="PDB" id="5O6C"/>
    </source>
</evidence>
<evidence type="ECO:0007744" key="26">
    <source>
    </source>
</evidence>
<evidence type="ECO:0007744" key="27">
    <source>
    </source>
</evidence>
<evidence type="ECO:0007744" key="28">
    <source>
    </source>
</evidence>
<evidence type="ECO:0007744" key="29">
    <source>
    </source>
</evidence>
<evidence type="ECO:0007744" key="30">
    <source>
    </source>
</evidence>
<evidence type="ECO:0007744" key="31">
    <source>
    </source>
</evidence>
<evidence type="ECO:0007744" key="32">
    <source>
    </source>
</evidence>
<evidence type="ECO:0007744" key="33">
    <source>
    </source>
</evidence>
<evidence type="ECO:0007829" key="34">
    <source>
        <dbReference type="PDB" id="5O6C"/>
    </source>
</evidence>
<evidence type="ECO:0007829" key="35">
    <source>
        <dbReference type="PDB" id="6T7F"/>
    </source>
</evidence>
<organism>
    <name type="scientific">Homo sapiens</name>
    <name type="common">Human</name>
    <dbReference type="NCBI Taxonomy" id="9606"/>
    <lineage>
        <taxon>Eukaryota</taxon>
        <taxon>Metazoa</taxon>
        <taxon>Chordata</taxon>
        <taxon>Craniata</taxon>
        <taxon>Vertebrata</taxon>
        <taxon>Euteleostomi</taxon>
        <taxon>Mammalia</taxon>
        <taxon>Eutheria</taxon>
        <taxon>Euarchontoglires</taxon>
        <taxon>Primates</taxon>
        <taxon>Haplorrhini</taxon>
        <taxon>Catarrhini</taxon>
        <taxon>Hominidae</taxon>
        <taxon>Homo</taxon>
    </lineage>
</organism>